<accession>B3DX74</accession>
<evidence type="ECO:0000255" key="1">
    <source>
        <dbReference type="HAMAP-Rule" id="MF_00188"/>
    </source>
</evidence>
<comment type="cofactor">
    <cofactor evidence="1">
        <name>Zn(2+)</name>
        <dbReference type="ChEBI" id="CHEBI:29105"/>
    </cofactor>
    <text evidence="1">Binds 1 zinc ion per subunit.</text>
</comment>
<comment type="subcellular location">
    <subcellularLocation>
        <location evidence="1">Cell inner membrane</location>
        <topology evidence="1">Multi-pass membrane protein</topology>
    </subcellularLocation>
</comment>
<comment type="similarity">
    <text evidence="1">Belongs to the peptidase M48B family.</text>
</comment>
<dbReference type="EC" id="3.4.24.-" evidence="1"/>
<dbReference type="EMBL" id="CP000975">
    <property type="protein sequence ID" value="ACD83783.1"/>
    <property type="molecule type" value="Genomic_DNA"/>
</dbReference>
<dbReference type="RefSeq" id="WP_012464065.1">
    <property type="nucleotide sequence ID" value="NC_010794.1"/>
</dbReference>
<dbReference type="SMR" id="B3DX74"/>
<dbReference type="STRING" id="481448.Minf_1729"/>
<dbReference type="MEROPS" id="M48.002"/>
<dbReference type="KEGG" id="min:Minf_1729"/>
<dbReference type="eggNOG" id="COG0501">
    <property type="taxonomic scope" value="Bacteria"/>
</dbReference>
<dbReference type="HOGENOM" id="CLU_042266_1_0_0"/>
<dbReference type="OrthoDB" id="15218at2"/>
<dbReference type="Proteomes" id="UP000009149">
    <property type="component" value="Chromosome"/>
</dbReference>
<dbReference type="GO" id="GO:0005886">
    <property type="term" value="C:plasma membrane"/>
    <property type="evidence" value="ECO:0007669"/>
    <property type="project" value="UniProtKB-SubCell"/>
</dbReference>
<dbReference type="GO" id="GO:0004222">
    <property type="term" value="F:metalloendopeptidase activity"/>
    <property type="evidence" value="ECO:0007669"/>
    <property type="project" value="UniProtKB-UniRule"/>
</dbReference>
<dbReference type="GO" id="GO:0008270">
    <property type="term" value="F:zinc ion binding"/>
    <property type="evidence" value="ECO:0007669"/>
    <property type="project" value="UniProtKB-UniRule"/>
</dbReference>
<dbReference type="GO" id="GO:0006508">
    <property type="term" value="P:proteolysis"/>
    <property type="evidence" value="ECO:0007669"/>
    <property type="project" value="UniProtKB-KW"/>
</dbReference>
<dbReference type="CDD" id="cd07335">
    <property type="entry name" value="M48B_HtpX_like"/>
    <property type="match status" value="1"/>
</dbReference>
<dbReference type="Gene3D" id="3.30.2010.10">
    <property type="entry name" value="Metalloproteases ('zincins'), catalytic domain"/>
    <property type="match status" value="1"/>
</dbReference>
<dbReference type="HAMAP" id="MF_00188">
    <property type="entry name" value="Pept_M48_protease_HtpX"/>
    <property type="match status" value="1"/>
</dbReference>
<dbReference type="InterPro" id="IPR050083">
    <property type="entry name" value="HtpX_protease"/>
</dbReference>
<dbReference type="InterPro" id="IPR022919">
    <property type="entry name" value="Pept_M48_protease_HtpX"/>
</dbReference>
<dbReference type="InterPro" id="IPR001915">
    <property type="entry name" value="Peptidase_M48"/>
</dbReference>
<dbReference type="NCBIfam" id="NF003965">
    <property type="entry name" value="PRK05457.1"/>
    <property type="match status" value="1"/>
</dbReference>
<dbReference type="PANTHER" id="PTHR43221">
    <property type="entry name" value="PROTEASE HTPX"/>
    <property type="match status" value="1"/>
</dbReference>
<dbReference type="PANTHER" id="PTHR43221:SF1">
    <property type="entry name" value="PROTEASE HTPX"/>
    <property type="match status" value="1"/>
</dbReference>
<dbReference type="Pfam" id="PF01435">
    <property type="entry name" value="Peptidase_M48"/>
    <property type="match status" value="1"/>
</dbReference>
<name>HTPX_METI4</name>
<feature type="chain" id="PRO_1000192745" description="Protease HtpX homolog">
    <location>
        <begin position="1"/>
        <end position="300"/>
    </location>
</feature>
<feature type="transmembrane region" description="Helical" evidence="1">
    <location>
        <begin position="5"/>
        <end position="25"/>
    </location>
</feature>
<feature type="transmembrane region" description="Helical" evidence="1">
    <location>
        <begin position="41"/>
        <end position="61"/>
    </location>
</feature>
<feature type="transmembrane region" description="Helical" evidence="1">
    <location>
        <begin position="161"/>
        <end position="181"/>
    </location>
</feature>
<feature type="transmembrane region" description="Helical" evidence="1">
    <location>
        <begin position="196"/>
        <end position="216"/>
    </location>
</feature>
<feature type="active site" evidence="1">
    <location>
        <position position="147"/>
    </location>
</feature>
<feature type="binding site" evidence="1">
    <location>
        <position position="146"/>
    </location>
    <ligand>
        <name>Zn(2+)</name>
        <dbReference type="ChEBI" id="CHEBI:29105"/>
        <note>catalytic</note>
    </ligand>
</feature>
<feature type="binding site" evidence="1">
    <location>
        <position position="150"/>
    </location>
    <ligand>
        <name>Zn(2+)</name>
        <dbReference type="ChEBI" id="CHEBI:29105"/>
        <note>catalytic</note>
    </ligand>
</feature>
<feature type="binding site" evidence="1">
    <location>
        <position position="225"/>
    </location>
    <ligand>
        <name>Zn(2+)</name>
        <dbReference type="ChEBI" id="CHEBI:29105"/>
        <note>catalytic</note>
    </ligand>
</feature>
<keyword id="KW-0997">Cell inner membrane</keyword>
<keyword id="KW-1003">Cell membrane</keyword>
<keyword id="KW-0378">Hydrolase</keyword>
<keyword id="KW-0472">Membrane</keyword>
<keyword id="KW-0479">Metal-binding</keyword>
<keyword id="KW-0482">Metalloprotease</keyword>
<keyword id="KW-0645">Protease</keyword>
<keyword id="KW-0812">Transmembrane</keyword>
<keyword id="KW-1133">Transmembrane helix</keyword>
<keyword id="KW-0862">Zinc</keyword>
<organism>
    <name type="scientific">Methylacidiphilum infernorum (isolate V4)</name>
    <name type="common">Methylokorus infernorum (strain V4)</name>
    <dbReference type="NCBI Taxonomy" id="481448"/>
    <lineage>
        <taxon>Bacteria</taxon>
        <taxon>Pseudomonadati</taxon>
        <taxon>Verrucomicrobiota</taxon>
        <taxon>Methylacidiphilae</taxon>
        <taxon>Methylacidiphilales</taxon>
        <taxon>Methylacidiphilaceae</taxon>
        <taxon>Methylacidiphilum (ex Ratnadevi et al. 2023)</taxon>
    </lineage>
</organism>
<gene>
    <name evidence="1" type="primary">htpX</name>
    <name type="ordered locus">Minf_1729</name>
</gene>
<reference key="1">
    <citation type="journal article" date="2008" name="Biol. Direct">
        <title>Complete genome sequence of the extremely acidophilic methanotroph isolate V4, Methylacidiphilum infernorum, a representative of the bacterial phylum Verrucomicrobia.</title>
        <authorList>
            <person name="Hou S."/>
            <person name="Makarova K.S."/>
            <person name="Saw J.H."/>
            <person name="Senin P."/>
            <person name="Ly B.V."/>
            <person name="Zhou Z."/>
            <person name="Ren Y."/>
            <person name="Wang J."/>
            <person name="Galperin M.Y."/>
            <person name="Omelchenko M.V."/>
            <person name="Wolf Y.I."/>
            <person name="Yutin N."/>
            <person name="Koonin E.V."/>
            <person name="Stott M.B."/>
            <person name="Mountain B.W."/>
            <person name="Crowe M.A."/>
            <person name="Smirnova A.V."/>
            <person name="Dunfield P.F."/>
            <person name="Feng L."/>
            <person name="Wang L."/>
            <person name="Alam M."/>
        </authorList>
    </citation>
    <scope>NUCLEOTIDE SEQUENCE [LARGE SCALE GENOMIC DNA]</scope>
    <source>
        <strain>Isolate V4</strain>
    </source>
</reference>
<sequence>MFKRIFLLTLTNIAVIFLLTLFISLLHLDRWLNAYGIDYQTLFLFSMVVGFTGSFISLAISKWMAKMAYNIHVIQEPSNEAERWLVETVAELAKRANIRMPEVGIYESPEVNAFATGPSRSNALVAVSTGILSQMNKKQIAGVLAHEITHINNGDMVTMTLLQGVVNTFVVFLSRIIGFFVDRLFSRNEERESIGIGFYLGMFISEIVLGLLASIIVAWYSRMREFRADAGGAHLAGKEAMISALKKLKQIMEGESAFIDERSPALNAFKINGRPGGILALLATHPPLDERIKALERIPD</sequence>
<protein>
    <recommendedName>
        <fullName evidence="1">Protease HtpX homolog</fullName>
        <ecNumber evidence="1">3.4.24.-</ecNumber>
    </recommendedName>
</protein>
<proteinExistence type="inferred from homology"/>